<evidence type="ECO:0000255" key="1">
    <source>
        <dbReference type="HAMAP-Rule" id="MF_01347"/>
    </source>
</evidence>
<gene>
    <name evidence="1" type="primary">atpD</name>
    <name type="ordered locus">GDI0696</name>
    <name type="ordered locus">Gdia_1313</name>
</gene>
<organism>
    <name type="scientific">Gluconacetobacter diazotrophicus (strain ATCC 49037 / DSM 5601 / CCUG 37298 / CIP 103539 / LMG 7603 / PAl5)</name>
    <dbReference type="NCBI Taxonomy" id="272568"/>
    <lineage>
        <taxon>Bacteria</taxon>
        <taxon>Pseudomonadati</taxon>
        <taxon>Pseudomonadota</taxon>
        <taxon>Alphaproteobacteria</taxon>
        <taxon>Acetobacterales</taxon>
        <taxon>Acetobacteraceae</taxon>
        <taxon>Gluconacetobacter</taxon>
    </lineage>
</organism>
<dbReference type="EC" id="7.1.2.2" evidence="1"/>
<dbReference type="EMBL" id="AM889285">
    <property type="protein sequence ID" value="CAP54639.1"/>
    <property type="molecule type" value="Genomic_DNA"/>
</dbReference>
<dbReference type="EMBL" id="CP001189">
    <property type="protein sequence ID" value="ACI51095.1"/>
    <property type="molecule type" value="Genomic_DNA"/>
</dbReference>
<dbReference type="RefSeq" id="WP_012223291.1">
    <property type="nucleotide sequence ID" value="NC_010125.1"/>
</dbReference>
<dbReference type="SMR" id="A9H9A8"/>
<dbReference type="STRING" id="272568.GDI0696"/>
<dbReference type="KEGG" id="gdi:GDI0696"/>
<dbReference type="KEGG" id="gdj:Gdia_1313"/>
<dbReference type="eggNOG" id="COG0055">
    <property type="taxonomic scope" value="Bacteria"/>
</dbReference>
<dbReference type="HOGENOM" id="CLU_022398_0_2_5"/>
<dbReference type="OrthoDB" id="9801639at2"/>
<dbReference type="Proteomes" id="UP000001176">
    <property type="component" value="Chromosome"/>
</dbReference>
<dbReference type="GO" id="GO:0005886">
    <property type="term" value="C:plasma membrane"/>
    <property type="evidence" value="ECO:0007669"/>
    <property type="project" value="UniProtKB-SubCell"/>
</dbReference>
<dbReference type="GO" id="GO:0045259">
    <property type="term" value="C:proton-transporting ATP synthase complex"/>
    <property type="evidence" value="ECO:0007669"/>
    <property type="project" value="UniProtKB-KW"/>
</dbReference>
<dbReference type="GO" id="GO:0005524">
    <property type="term" value="F:ATP binding"/>
    <property type="evidence" value="ECO:0007669"/>
    <property type="project" value="UniProtKB-UniRule"/>
</dbReference>
<dbReference type="GO" id="GO:0016887">
    <property type="term" value="F:ATP hydrolysis activity"/>
    <property type="evidence" value="ECO:0007669"/>
    <property type="project" value="InterPro"/>
</dbReference>
<dbReference type="GO" id="GO:0046933">
    <property type="term" value="F:proton-transporting ATP synthase activity, rotational mechanism"/>
    <property type="evidence" value="ECO:0007669"/>
    <property type="project" value="UniProtKB-UniRule"/>
</dbReference>
<dbReference type="CDD" id="cd18110">
    <property type="entry name" value="ATP-synt_F1_beta_C"/>
    <property type="match status" value="1"/>
</dbReference>
<dbReference type="CDD" id="cd18115">
    <property type="entry name" value="ATP-synt_F1_beta_N"/>
    <property type="match status" value="1"/>
</dbReference>
<dbReference type="CDD" id="cd01133">
    <property type="entry name" value="F1-ATPase_beta_CD"/>
    <property type="match status" value="1"/>
</dbReference>
<dbReference type="FunFam" id="1.10.1140.10:FF:000001">
    <property type="entry name" value="ATP synthase subunit beta"/>
    <property type="match status" value="1"/>
</dbReference>
<dbReference type="FunFam" id="3.40.50.300:FF:000026">
    <property type="entry name" value="ATP synthase subunit beta"/>
    <property type="match status" value="1"/>
</dbReference>
<dbReference type="Gene3D" id="2.40.10.170">
    <property type="match status" value="1"/>
</dbReference>
<dbReference type="Gene3D" id="1.10.1140.10">
    <property type="entry name" value="Bovine Mitochondrial F1-atpase, Atp Synthase Beta Chain, Chain D, domain 3"/>
    <property type="match status" value="1"/>
</dbReference>
<dbReference type="Gene3D" id="3.40.50.300">
    <property type="entry name" value="P-loop containing nucleotide triphosphate hydrolases"/>
    <property type="match status" value="1"/>
</dbReference>
<dbReference type="HAMAP" id="MF_01347">
    <property type="entry name" value="ATP_synth_beta_bact"/>
    <property type="match status" value="1"/>
</dbReference>
<dbReference type="InterPro" id="IPR003593">
    <property type="entry name" value="AAA+_ATPase"/>
</dbReference>
<dbReference type="InterPro" id="IPR055190">
    <property type="entry name" value="ATP-synt_VA_C"/>
</dbReference>
<dbReference type="InterPro" id="IPR005722">
    <property type="entry name" value="ATP_synth_F1_bsu"/>
</dbReference>
<dbReference type="InterPro" id="IPR020003">
    <property type="entry name" value="ATPase_a/bsu_AS"/>
</dbReference>
<dbReference type="InterPro" id="IPR050053">
    <property type="entry name" value="ATPase_alpha/beta_chains"/>
</dbReference>
<dbReference type="InterPro" id="IPR004100">
    <property type="entry name" value="ATPase_F1/V1/A1_a/bsu_N"/>
</dbReference>
<dbReference type="InterPro" id="IPR036121">
    <property type="entry name" value="ATPase_F1/V1/A1_a/bsu_N_sf"/>
</dbReference>
<dbReference type="InterPro" id="IPR000194">
    <property type="entry name" value="ATPase_F1/V1/A1_a/bsu_nucl-bd"/>
</dbReference>
<dbReference type="InterPro" id="IPR024034">
    <property type="entry name" value="ATPase_F1/V1_b/a_C"/>
</dbReference>
<dbReference type="InterPro" id="IPR027417">
    <property type="entry name" value="P-loop_NTPase"/>
</dbReference>
<dbReference type="NCBIfam" id="TIGR01039">
    <property type="entry name" value="atpD"/>
    <property type="match status" value="1"/>
</dbReference>
<dbReference type="PANTHER" id="PTHR15184">
    <property type="entry name" value="ATP SYNTHASE"/>
    <property type="match status" value="1"/>
</dbReference>
<dbReference type="PANTHER" id="PTHR15184:SF71">
    <property type="entry name" value="ATP SYNTHASE SUBUNIT BETA, MITOCHONDRIAL"/>
    <property type="match status" value="1"/>
</dbReference>
<dbReference type="Pfam" id="PF00006">
    <property type="entry name" value="ATP-synt_ab"/>
    <property type="match status" value="1"/>
</dbReference>
<dbReference type="Pfam" id="PF02874">
    <property type="entry name" value="ATP-synt_ab_N"/>
    <property type="match status" value="1"/>
</dbReference>
<dbReference type="Pfam" id="PF22919">
    <property type="entry name" value="ATP-synt_VA_C"/>
    <property type="match status" value="1"/>
</dbReference>
<dbReference type="PIRSF" id="PIRSF039072">
    <property type="entry name" value="ATPase_subunit_beta"/>
    <property type="match status" value="1"/>
</dbReference>
<dbReference type="SMART" id="SM00382">
    <property type="entry name" value="AAA"/>
    <property type="match status" value="1"/>
</dbReference>
<dbReference type="SUPFAM" id="SSF47917">
    <property type="entry name" value="C-terminal domain of alpha and beta subunits of F1 ATP synthase"/>
    <property type="match status" value="1"/>
</dbReference>
<dbReference type="SUPFAM" id="SSF50615">
    <property type="entry name" value="N-terminal domain of alpha and beta subunits of F1 ATP synthase"/>
    <property type="match status" value="1"/>
</dbReference>
<dbReference type="SUPFAM" id="SSF52540">
    <property type="entry name" value="P-loop containing nucleoside triphosphate hydrolases"/>
    <property type="match status" value="1"/>
</dbReference>
<dbReference type="PROSITE" id="PS00152">
    <property type="entry name" value="ATPASE_ALPHA_BETA"/>
    <property type="match status" value="1"/>
</dbReference>
<reference key="1">
    <citation type="journal article" date="2009" name="BMC Genomics">
        <title>Complete genome sequence of the sugarcane nitrogen-fixing endophyte Gluconacetobacter diazotrophicus Pal5.</title>
        <authorList>
            <person name="Bertalan M."/>
            <person name="Albano R."/>
            <person name="de Padua V."/>
            <person name="Rouws L."/>
            <person name="Rojas C."/>
            <person name="Hemerly A."/>
            <person name="Teixeira K."/>
            <person name="Schwab S."/>
            <person name="Araujo J."/>
            <person name="Oliveira A."/>
            <person name="Franca L."/>
            <person name="Magalhaes V."/>
            <person name="Alqueres S."/>
            <person name="Cardoso A."/>
            <person name="Almeida W."/>
            <person name="Loureiro M.M."/>
            <person name="Nogueira E."/>
            <person name="Cidade D."/>
            <person name="Oliveira D."/>
            <person name="Simao T."/>
            <person name="Macedo J."/>
            <person name="Valadao A."/>
            <person name="Dreschsel M."/>
            <person name="Freitas F."/>
            <person name="Vidal M."/>
            <person name="Guedes H."/>
            <person name="Rodrigues E."/>
            <person name="Meneses C."/>
            <person name="Brioso P."/>
            <person name="Pozzer L."/>
            <person name="Figueiredo D."/>
            <person name="Montano H."/>
            <person name="Junior J."/>
            <person name="de Souza Filho G."/>
            <person name="Martin Quintana Flores V."/>
            <person name="Ferreira B."/>
            <person name="Branco A."/>
            <person name="Gonzalez P."/>
            <person name="Guillobel H."/>
            <person name="Lemos M."/>
            <person name="Seibel L."/>
            <person name="Macedo J."/>
            <person name="Alves-Ferreira M."/>
            <person name="Sachetto-Martins G."/>
            <person name="Coelho A."/>
            <person name="Santos E."/>
            <person name="Amaral G."/>
            <person name="Neves A."/>
            <person name="Pacheco A.B."/>
            <person name="Carvalho D."/>
            <person name="Lery L."/>
            <person name="Bisch P."/>
            <person name="Rossle S.C."/>
            <person name="Urmenyi T."/>
            <person name="Rael Pereira A."/>
            <person name="Silva R."/>
            <person name="Rondinelli E."/>
            <person name="von Kruger W."/>
            <person name="Martins O."/>
            <person name="Baldani J.I."/>
            <person name="Ferreira P.C."/>
        </authorList>
    </citation>
    <scope>NUCLEOTIDE SEQUENCE [LARGE SCALE GENOMIC DNA]</scope>
    <source>
        <strain>ATCC 49037 / DSM 5601 / CCUG 37298 / CIP 103539 / LMG 7603 / PAl5</strain>
    </source>
</reference>
<reference key="2">
    <citation type="journal article" date="2010" name="Stand. Genomic Sci.">
        <title>Two genome sequences of the same bacterial strain, Gluconacetobacter diazotrophicus PAl 5, suggest a new standard in genome sequence submission.</title>
        <authorList>
            <person name="Giongo A."/>
            <person name="Tyler H.L."/>
            <person name="Zipperer U.N."/>
            <person name="Triplett E.W."/>
        </authorList>
    </citation>
    <scope>NUCLEOTIDE SEQUENCE [LARGE SCALE GENOMIC DNA]</scope>
    <source>
        <strain>ATCC 49037 / DSM 5601 / CCUG 37298 / CIP 103539 / LMG 7603 / PAl5</strain>
    </source>
</reference>
<feature type="chain" id="PRO_0000339530" description="ATP synthase subunit beta">
    <location>
        <begin position="1"/>
        <end position="493"/>
    </location>
</feature>
<feature type="binding site" evidence="1">
    <location>
        <begin position="169"/>
        <end position="176"/>
    </location>
    <ligand>
        <name>ATP</name>
        <dbReference type="ChEBI" id="CHEBI:30616"/>
    </ligand>
</feature>
<comment type="function">
    <text evidence="1">Produces ATP from ADP in the presence of a proton gradient across the membrane. The catalytic sites are hosted primarily by the beta subunits.</text>
</comment>
<comment type="catalytic activity">
    <reaction evidence="1">
        <text>ATP + H2O + 4 H(+)(in) = ADP + phosphate + 5 H(+)(out)</text>
        <dbReference type="Rhea" id="RHEA:57720"/>
        <dbReference type="ChEBI" id="CHEBI:15377"/>
        <dbReference type="ChEBI" id="CHEBI:15378"/>
        <dbReference type="ChEBI" id="CHEBI:30616"/>
        <dbReference type="ChEBI" id="CHEBI:43474"/>
        <dbReference type="ChEBI" id="CHEBI:456216"/>
        <dbReference type="EC" id="7.1.2.2"/>
    </reaction>
</comment>
<comment type="subunit">
    <text evidence="1">F-type ATPases have 2 components, CF(1) - the catalytic core - and CF(0) - the membrane proton channel. CF(1) has five subunits: alpha(3), beta(3), gamma(1), delta(1), epsilon(1). CF(0) has three main subunits: a(1), b(2) and c(9-12). The alpha and beta chains form an alternating ring which encloses part of the gamma chain. CF(1) is attached to CF(0) by a central stalk formed by the gamma and epsilon chains, while a peripheral stalk is formed by the delta and b chains.</text>
</comment>
<comment type="subcellular location">
    <subcellularLocation>
        <location evidence="1">Cell inner membrane</location>
        <topology evidence="1">Peripheral membrane protein</topology>
    </subcellularLocation>
</comment>
<comment type="similarity">
    <text evidence="1">Belongs to the ATPase alpha/beta chains family.</text>
</comment>
<sequence length="493" mass="52874">MSETTQNEAPVAAQGASQHSNIVGRVTQVRGAVVDVQFEGTLPHILDALHVTFNGQTVVLEVAQEIGEHEVRCIAMDTTDGLMRGTEVVATGGQITVPVGPGTLGRILNVIGEPIDERGPVKSDKRYPIHRKAPSFDEQAAATEILVTGIKVVDLLCPYLKGGKVGLFGGAGVGKTVIIQELINNIAKAHGGVSVFAGVGERTREGNDLYYEMQDAGVIKLGEDTTEGSKVALVYGQMNEPPGARARIALSGLSLAEYFRDEEGQDVLFFVDNIFRFTQAGAEVSALLGRIPSAVGYQPTLATEMGALQERITSTKKGSITSVQAVYVPADDLTDPAPAATFAHLDATTVLNRSIAEMGIYPAVDPLDSTSRSLDPKIVGEEHYQVARDVQRILQTYKSLQDIIAILGMDELSEDDKQVVARARRIQRFLSQPFHVAEVFTGAPGKLVSLEDTVRSFKAIVAGEYDHLPEGAFYMVGSIEEAVAKAEKMKETA</sequence>
<name>ATPB_GLUDA</name>
<keyword id="KW-0066">ATP synthesis</keyword>
<keyword id="KW-0067">ATP-binding</keyword>
<keyword id="KW-0997">Cell inner membrane</keyword>
<keyword id="KW-1003">Cell membrane</keyword>
<keyword id="KW-0139">CF(1)</keyword>
<keyword id="KW-0375">Hydrogen ion transport</keyword>
<keyword id="KW-0406">Ion transport</keyword>
<keyword id="KW-0472">Membrane</keyword>
<keyword id="KW-0547">Nucleotide-binding</keyword>
<keyword id="KW-1185">Reference proteome</keyword>
<keyword id="KW-1278">Translocase</keyword>
<keyword id="KW-0813">Transport</keyword>
<proteinExistence type="inferred from homology"/>
<accession>A9H9A8</accession>
<accession>B5ZHL5</accession>
<protein>
    <recommendedName>
        <fullName evidence="1">ATP synthase subunit beta</fullName>
        <ecNumber evidence="1">7.1.2.2</ecNumber>
    </recommendedName>
    <alternativeName>
        <fullName evidence="1">ATP synthase F1 sector subunit beta</fullName>
    </alternativeName>
    <alternativeName>
        <fullName evidence="1">F-ATPase subunit beta</fullName>
    </alternativeName>
</protein>